<sequence>MKKSIYRSLKTQQHPLLLRRPLPPKLPKVPLLKKKVRIVHTVKAREPKEETYGKFDPDESAFVKMDQNVSQSQRPTSTQTICLDYDHKALERVVNIFPHQHRVRRFHWKVPKSTAGSMFIPRCLSASSRIFKNTLSQMKKRAKKSSKKEVKEDGYLTKKTFNTLVLSKEFSKPSPTSYSRFIASKFKPLGTQFHPAPKISGYSQELPLLRDVKRAALSPVPSTSSVIPEPQWSERTHPSAAPSKVVLNTGSLPPARSLPTPVLPRKPLRQAMIENAAAAAAAAAAAAAATTTTTTTTTTTTTAVTTTAAVSGKTEAHKPPETVQRTTRTIGPDAHVLRGEGFKAVAATRSETVLALTTLAIINCQIYGRNALNLKGFFLANCPDLTPVAFQLVYLNLSFNDLNQFPIEILYLQNLQVLKLRNNPIKEIPSEIHLLTYLRIFSIAFNYITKLPDGLFCLNYLEELDVSYNEIENISNEIQKLRSLEKLIVDGNPITSFPPGILKLNLIKLQIENTFTCSQFWLESSWNDPQQLTQICSLFLVKNKLLDYIPDAVRKSLKSTSECDWCHGPKFGEGFRIIRSCDIFGVSHVPIMFHVCSSTCYRDIRETSFVLEGFPSRRIALHMDWVKESKVSNVSFYL</sequence>
<name>LRC63_MOUSE</name>
<accession>A6H694</accession>
<accession>G3X8V0</accession>
<accession>Q9D5X5</accession>
<evidence type="ECO:0000255" key="1"/>
<evidence type="ECO:0000256" key="2">
    <source>
        <dbReference type="SAM" id="MobiDB-lite"/>
    </source>
</evidence>
<evidence type="ECO:0000305" key="3"/>
<evidence type="ECO:0000312" key="4">
    <source>
        <dbReference type="MGI" id="MGI:1918109"/>
    </source>
</evidence>
<evidence type="ECO:0000312" key="5">
    <source>
        <dbReference type="Proteomes" id="UP000000589"/>
    </source>
</evidence>
<keyword id="KW-0433">Leucine-rich repeat</keyword>
<keyword id="KW-1185">Reference proteome</keyword>
<keyword id="KW-0677">Repeat</keyword>
<comment type="sequence caution" evidence="3">
    <conflict type="erroneous initiation">
        <sequence resource="EMBL-CDS" id="BAB29582"/>
    </conflict>
</comment>
<feature type="chain" id="PRO_0000320629" description="Leucine-rich repeat-containing protein 63">
    <location>
        <begin position="1"/>
        <end position="638"/>
    </location>
</feature>
<feature type="repeat" description="LRR 1" evidence="1">
    <location>
        <begin position="389"/>
        <end position="412"/>
    </location>
</feature>
<feature type="repeat" description="LRR 2" evidence="1">
    <location>
        <begin position="413"/>
        <end position="435"/>
    </location>
</feature>
<feature type="repeat" description="LRR 3" evidence="1">
    <location>
        <begin position="437"/>
        <end position="458"/>
    </location>
</feature>
<feature type="repeat" description="LRR 4" evidence="1">
    <location>
        <begin position="460"/>
        <end position="481"/>
    </location>
</feature>
<feature type="repeat" description="LRR 5" evidence="1">
    <location>
        <begin position="482"/>
        <end position="504"/>
    </location>
</feature>
<feature type="repeat" description="LRR 6" evidence="1">
    <location>
        <begin position="532"/>
        <end position="556"/>
    </location>
</feature>
<feature type="region of interest" description="Disordered" evidence="2">
    <location>
        <begin position="220"/>
        <end position="241"/>
    </location>
</feature>
<feature type="region of interest" description="Disordered" evidence="2">
    <location>
        <begin position="306"/>
        <end position="325"/>
    </location>
</feature>
<feature type="sequence conflict" description="In Ref. 2; AAI45797." evidence="3" ref="2">
    <original>TTTTT</original>
    <variation>AAAAA</variation>
    <location>
        <begin position="290"/>
        <end position="294"/>
    </location>
</feature>
<feature type="sequence conflict" description="In Ref. 2; AAI45797." evidence="3" ref="2">
    <original>TAV</original>
    <variation>AA</variation>
    <location>
        <begin position="302"/>
        <end position="304"/>
    </location>
</feature>
<reference evidence="5" key="1">
    <citation type="journal article" date="2009" name="PLoS Biol.">
        <title>Lineage-specific biology revealed by a finished genome assembly of the mouse.</title>
        <authorList>
            <person name="Church D.M."/>
            <person name="Goodstadt L."/>
            <person name="Hillier L.W."/>
            <person name="Zody M.C."/>
            <person name="Goldstein S."/>
            <person name="She X."/>
            <person name="Bult C.J."/>
            <person name="Agarwala R."/>
            <person name="Cherry J.L."/>
            <person name="DiCuccio M."/>
            <person name="Hlavina W."/>
            <person name="Kapustin Y."/>
            <person name="Meric P."/>
            <person name="Maglott D."/>
            <person name="Birtle Z."/>
            <person name="Marques A.C."/>
            <person name="Graves T."/>
            <person name="Zhou S."/>
            <person name="Teague B."/>
            <person name="Potamousis K."/>
            <person name="Churas C."/>
            <person name="Place M."/>
            <person name="Herschleb J."/>
            <person name="Runnheim R."/>
            <person name="Forrest D."/>
            <person name="Amos-Landgraf J."/>
            <person name="Schwartz D.C."/>
            <person name="Cheng Z."/>
            <person name="Lindblad-Toh K."/>
            <person name="Eichler E.E."/>
            <person name="Ponting C.P."/>
        </authorList>
    </citation>
    <scope>NUCLEOTIDE SEQUENCE [LARGE SCALE GENOMIC DNA]</scope>
    <source>
        <strain evidence="5">C57BL/6J</strain>
    </source>
</reference>
<reference key="2">
    <citation type="journal article" date="2004" name="Genome Res.">
        <title>The status, quality, and expansion of the NIH full-length cDNA project: the Mammalian Gene Collection (MGC).</title>
        <authorList>
            <consortium name="The MGC Project Team"/>
        </authorList>
    </citation>
    <scope>NUCLEOTIDE SEQUENCE [LARGE SCALE MRNA]</scope>
    <source>
        <tissue>Brain</tissue>
    </source>
</reference>
<reference key="3">
    <citation type="journal article" date="2005" name="Science">
        <title>The transcriptional landscape of the mammalian genome.</title>
        <authorList>
            <person name="Carninci P."/>
            <person name="Kasukawa T."/>
            <person name="Katayama S."/>
            <person name="Gough J."/>
            <person name="Frith M.C."/>
            <person name="Maeda N."/>
            <person name="Oyama R."/>
            <person name="Ravasi T."/>
            <person name="Lenhard B."/>
            <person name="Wells C."/>
            <person name="Kodzius R."/>
            <person name="Shimokawa K."/>
            <person name="Bajic V.B."/>
            <person name="Brenner S.E."/>
            <person name="Batalov S."/>
            <person name="Forrest A.R."/>
            <person name="Zavolan M."/>
            <person name="Davis M.J."/>
            <person name="Wilming L.G."/>
            <person name="Aidinis V."/>
            <person name="Allen J.E."/>
            <person name="Ambesi-Impiombato A."/>
            <person name="Apweiler R."/>
            <person name="Aturaliya R.N."/>
            <person name="Bailey T.L."/>
            <person name="Bansal M."/>
            <person name="Baxter L."/>
            <person name="Beisel K.W."/>
            <person name="Bersano T."/>
            <person name="Bono H."/>
            <person name="Chalk A.M."/>
            <person name="Chiu K.P."/>
            <person name="Choudhary V."/>
            <person name="Christoffels A."/>
            <person name="Clutterbuck D.R."/>
            <person name="Crowe M.L."/>
            <person name="Dalla E."/>
            <person name="Dalrymple B.P."/>
            <person name="de Bono B."/>
            <person name="Della Gatta G."/>
            <person name="di Bernardo D."/>
            <person name="Down T."/>
            <person name="Engstrom P."/>
            <person name="Fagiolini M."/>
            <person name="Faulkner G."/>
            <person name="Fletcher C.F."/>
            <person name="Fukushima T."/>
            <person name="Furuno M."/>
            <person name="Futaki S."/>
            <person name="Gariboldi M."/>
            <person name="Georgii-Hemming P."/>
            <person name="Gingeras T.R."/>
            <person name="Gojobori T."/>
            <person name="Green R.E."/>
            <person name="Gustincich S."/>
            <person name="Harbers M."/>
            <person name="Hayashi Y."/>
            <person name="Hensch T.K."/>
            <person name="Hirokawa N."/>
            <person name="Hill D."/>
            <person name="Huminiecki L."/>
            <person name="Iacono M."/>
            <person name="Ikeo K."/>
            <person name="Iwama A."/>
            <person name="Ishikawa T."/>
            <person name="Jakt M."/>
            <person name="Kanapin A."/>
            <person name="Katoh M."/>
            <person name="Kawasawa Y."/>
            <person name="Kelso J."/>
            <person name="Kitamura H."/>
            <person name="Kitano H."/>
            <person name="Kollias G."/>
            <person name="Krishnan S.P."/>
            <person name="Kruger A."/>
            <person name="Kummerfeld S.K."/>
            <person name="Kurochkin I.V."/>
            <person name="Lareau L.F."/>
            <person name="Lazarevic D."/>
            <person name="Lipovich L."/>
            <person name="Liu J."/>
            <person name="Liuni S."/>
            <person name="McWilliam S."/>
            <person name="Madan Babu M."/>
            <person name="Madera M."/>
            <person name="Marchionni L."/>
            <person name="Matsuda H."/>
            <person name="Matsuzawa S."/>
            <person name="Miki H."/>
            <person name="Mignone F."/>
            <person name="Miyake S."/>
            <person name="Morris K."/>
            <person name="Mottagui-Tabar S."/>
            <person name="Mulder N."/>
            <person name="Nakano N."/>
            <person name="Nakauchi H."/>
            <person name="Ng P."/>
            <person name="Nilsson R."/>
            <person name="Nishiguchi S."/>
            <person name="Nishikawa S."/>
            <person name="Nori F."/>
            <person name="Ohara O."/>
            <person name="Okazaki Y."/>
            <person name="Orlando V."/>
            <person name="Pang K.C."/>
            <person name="Pavan W.J."/>
            <person name="Pavesi G."/>
            <person name="Pesole G."/>
            <person name="Petrovsky N."/>
            <person name="Piazza S."/>
            <person name="Reed J."/>
            <person name="Reid J.F."/>
            <person name="Ring B.Z."/>
            <person name="Ringwald M."/>
            <person name="Rost B."/>
            <person name="Ruan Y."/>
            <person name="Salzberg S.L."/>
            <person name="Sandelin A."/>
            <person name="Schneider C."/>
            <person name="Schoenbach C."/>
            <person name="Sekiguchi K."/>
            <person name="Semple C.A."/>
            <person name="Seno S."/>
            <person name="Sessa L."/>
            <person name="Sheng Y."/>
            <person name="Shibata Y."/>
            <person name="Shimada H."/>
            <person name="Shimada K."/>
            <person name="Silva D."/>
            <person name="Sinclair B."/>
            <person name="Sperling S."/>
            <person name="Stupka E."/>
            <person name="Sugiura K."/>
            <person name="Sultana R."/>
            <person name="Takenaka Y."/>
            <person name="Taki K."/>
            <person name="Tammoja K."/>
            <person name="Tan S.L."/>
            <person name="Tang S."/>
            <person name="Taylor M.S."/>
            <person name="Tegner J."/>
            <person name="Teichmann S.A."/>
            <person name="Ueda H.R."/>
            <person name="van Nimwegen E."/>
            <person name="Verardo R."/>
            <person name="Wei C.L."/>
            <person name="Yagi K."/>
            <person name="Yamanishi H."/>
            <person name="Zabarovsky E."/>
            <person name="Zhu S."/>
            <person name="Zimmer A."/>
            <person name="Hide W."/>
            <person name="Bult C."/>
            <person name="Grimmond S.M."/>
            <person name="Teasdale R.D."/>
            <person name="Liu E.T."/>
            <person name="Brusic V."/>
            <person name="Quackenbush J."/>
            <person name="Wahlestedt C."/>
            <person name="Mattick J.S."/>
            <person name="Hume D.A."/>
            <person name="Kai C."/>
            <person name="Sasaki D."/>
            <person name="Tomaru Y."/>
            <person name="Fukuda S."/>
            <person name="Kanamori-Katayama M."/>
            <person name="Suzuki M."/>
            <person name="Aoki J."/>
            <person name="Arakawa T."/>
            <person name="Iida J."/>
            <person name="Imamura K."/>
            <person name="Itoh M."/>
            <person name="Kato T."/>
            <person name="Kawaji H."/>
            <person name="Kawagashira N."/>
            <person name="Kawashima T."/>
            <person name="Kojima M."/>
            <person name="Kondo S."/>
            <person name="Konno H."/>
            <person name="Nakano K."/>
            <person name="Ninomiya N."/>
            <person name="Nishio T."/>
            <person name="Okada M."/>
            <person name="Plessy C."/>
            <person name="Shibata K."/>
            <person name="Shiraki T."/>
            <person name="Suzuki S."/>
            <person name="Tagami M."/>
            <person name="Waki K."/>
            <person name="Watahiki A."/>
            <person name="Okamura-Oho Y."/>
            <person name="Suzuki H."/>
            <person name="Kawai J."/>
            <person name="Hayashizaki Y."/>
        </authorList>
    </citation>
    <scope>NUCLEOTIDE SEQUENCE [LARGE SCALE MRNA] OF 38-637</scope>
    <source>
        <strain>C57BL/6J</strain>
        <tissue>Testis</tissue>
    </source>
</reference>
<organism>
    <name type="scientific">Mus musculus</name>
    <name type="common">Mouse</name>
    <dbReference type="NCBI Taxonomy" id="10090"/>
    <lineage>
        <taxon>Eukaryota</taxon>
        <taxon>Metazoa</taxon>
        <taxon>Chordata</taxon>
        <taxon>Craniata</taxon>
        <taxon>Vertebrata</taxon>
        <taxon>Euteleostomi</taxon>
        <taxon>Mammalia</taxon>
        <taxon>Eutheria</taxon>
        <taxon>Euarchontoglires</taxon>
        <taxon>Glires</taxon>
        <taxon>Rodentia</taxon>
        <taxon>Myomorpha</taxon>
        <taxon>Muroidea</taxon>
        <taxon>Muridae</taxon>
        <taxon>Murinae</taxon>
        <taxon>Mus</taxon>
        <taxon>Mus</taxon>
    </lineage>
</organism>
<proteinExistence type="evidence at transcript level"/>
<dbReference type="EMBL" id="BC145796">
    <property type="protein sequence ID" value="AAI45797.1"/>
    <property type="molecule type" value="mRNA"/>
</dbReference>
<dbReference type="EMBL" id="AK014850">
    <property type="protein sequence ID" value="BAB29582.1"/>
    <property type="status" value="ALT_INIT"/>
    <property type="molecule type" value="mRNA"/>
</dbReference>
<dbReference type="CCDS" id="CCDS49539.1"/>
<dbReference type="RefSeq" id="NP_001391566.1">
    <property type="nucleotide sequence ID" value="NM_001404637.1"/>
</dbReference>
<dbReference type="RefSeq" id="NP_081857.1">
    <property type="nucleotide sequence ID" value="NM_027581.2"/>
</dbReference>
<dbReference type="RefSeq" id="XP_006519608.1">
    <property type="nucleotide sequence ID" value="XM_006519545.1"/>
</dbReference>
<dbReference type="RefSeq" id="XP_006519609.1">
    <property type="nucleotide sequence ID" value="XM_006519546.1"/>
</dbReference>
<dbReference type="SMR" id="A6H694"/>
<dbReference type="STRING" id="10090.ENSMUSP00000022574"/>
<dbReference type="PhosphoSitePlus" id="A6H694"/>
<dbReference type="PaxDb" id="10090-ENSMUSP00000022574"/>
<dbReference type="ProteomicsDB" id="292030"/>
<dbReference type="ProteomicsDB" id="340562"/>
<dbReference type="Antibodypedia" id="49501">
    <property type="antibodies" value="54 antibodies from 11 providers"/>
</dbReference>
<dbReference type="Ensembl" id="ENSMUST00000022574.5">
    <property type="protein sequence ID" value="ENSMUSP00000022574.4"/>
    <property type="gene ID" value="ENSMUSG00000021997.5"/>
</dbReference>
<dbReference type="GeneID" id="70859"/>
<dbReference type="KEGG" id="mmu:70859"/>
<dbReference type="AGR" id="MGI:1918109"/>
<dbReference type="CTD" id="220416"/>
<dbReference type="MGI" id="MGI:1918109">
    <property type="gene designation" value="Lrrc63"/>
</dbReference>
<dbReference type="VEuPathDB" id="HostDB:ENSMUSG00000021997"/>
<dbReference type="eggNOG" id="KOG0619">
    <property type="taxonomic scope" value="Eukaryota"/>
</dbReference>
<dbReference type="GeneTree" id="ENSGT00710000106860"/>
<dbReference type="HOGENOM" id="CLU_027651_0_0_1"/>
<dbReference type="InParanoid" id="A6H694"/>
<dbReference type="OMA" id="YWHIPET"/>
<dbReference type="OrthoDB" id="660555at2759"/>
<dbReference type="PhylomeDB" id="A6H694"/>
<dbReference type="TreeFam" id="TF329649"/>
<dbReference type="BioGRID-ORCS" id="70859">
    <property type="hits" value="6 hits in 76 CRISPR screens"/>
</dbReference>
<dbReference type="ChiTaRS" id="Lrrc63">
    <property type="organism name" value="mouse"/>
</dbReference>
<dbReference type="PRO" id="PR:A6H694"/>
<dbReference type="Proteomes" id="UP000000589">
    <property type="component" value="Chromosome 14"/>
</dbReference>
<dbReference type="RNAct" id="A6H694">
    <property type="molecule type" value="protein"/>
</dbReference>
<dbReference type="Bgee" id="ENSMUSG00000021997">
    <property type="expression patterns" value="Expressed in seminiferous tubule of testis and 9 other cell types or tissues"/>
</dbReference>
<dbReference type="Gene3D" id="3.80.10.10">
    <property type="entry name" value="Ribonuclease Inhibitor"/>
    <property type="match status" value="1"/>
</dbReference>
<dbReference type="InterPro" id="IPR001611">
    <property type="entry name" value="Leu-rich_rpt"/>
</dbReference>
<dbReference type="InterPro" id="IPR003591">
    <property type="entry name" value="Leu-rich_rpt_typical-subtyp"/>
</dbReference>
<dbReference type="InterPro" id="IPR032675">
    <property type="entry name" value="LRR_dom_sf"/>
</dbReference>
<dbReference type="InterPro" id="IPR050216">
    <property type="entry name" value="LRR_domain-containing"/>
</dbReference>
<dbReference type="InterPro" id="IPR055414">
    <property type="entry name" value="LRR_R13L4/SHOC2-like"/>
</dbReference>
<dbReference type="PANTHER" id="PTHR48051">
    <property type="match status" value="1"/>
</dbReference>
<dbReference type="PANTHER" id="PTHR48051:SF1">
    <property type="entry name" value="RAS SUPPRESSOR PROTEIN 1"/>
    <property type="match status" value="1"/>
</dbReference>
<dbReference type="Pfam" id="PF23598">
    <property type="entry name" value="LRR_14"/>
    <property type="match status" value="1"/>
</dbReference>
<dbReference type="SMART" id="SM00369">
    <property type="entry name" value="LRR_TYP"/>
    <property type="match status" value="3"/>
</dbReference>
<dbReference type="SUPFAM" id="SSF52058">
    <property type="entry name" value="L domain-like"/>
    <property type="match status" value="1"/>
</dbReference>
<dbReference type="PROSITE" id="PS51450">
    <property type="entry name" value="LRR"/>
    <property type="match status" value="5"/>
</dbReference>
<gene>
    <name evidence="4" type="primary">Lrrc63</name>
</gene>
<protein>
    <recommendedName>
        <fullName>Leucine-rich repeat-containing protein 63</fullName>
    </recommendedName>
</protein>